<gene>
    <name evidence="1" type="primary">rplK</name>
    <name type="ordered locus">PP_0443</name>
</gene>
<name>RL11_PSEPK</name>
<reference key="1">
    <citation type="journal article" date="2002" name="Environ. Microbiol.">
        <title>Complete genome sequence and comparative analysis of the metabolically versatile Pseudomonas putida KT2440.</title>
        <authorList>
            <person name="Nelson K.E."/>
            <person name="Weinel C."/>
            <person name="Paulsen I.T."/>
            <person name="Dodson R.J."/>
            <person name="Hilbert H."/>
            <person name="Martins dos Santos V.A.P."/>
            <person name="Fouts D.E."/>
            <person name="Gill S.R."/>
            <person name="Pop M."/>
            <person name="Holmes M."/>
            <person name="Brinkac L.M."/>
            <person name="Beanan M.J."/>
            <person name="DeBoy R.T."/>
            <person name="Daugherty S.C."/>
            <person name="Kolonay J.F."/>
            <person name="Madupu R."/>
            <person name="Nelson W.C."/>
            <person name="White O."/>
            <person name="Peterson J.D."/>
            <person name="Khouri H.M."/>
            <person name="Hance I."/>
            <person name="Chris Lee P."/>
            <person name="Holtzapple E.K."/>
            <person name="Scanlan D."/>
            <person name="Tran K."/>
            <person name="Moazzez A."/>
            <person name="Utterback T.R."/>
            <person name="Rizzo M."/>
            <person name="Lee K."/>
            <person name="Kosack D."/>
            <person name="Moestl D."/>
            <person name="Wedler H."/>
            <person name="Lauber J."/>
            <person name="Stjepandic D."/>
            <person name="Hoheisel J."/>
            <person name="Straetz M."/>
            <person name="Heim S."/>
            <person name="Kiewitz C."/>
            <person name="Eisen J.A."/>
            <person name="Timmis K.N."/>
            <person name="Duesterhoeft A."/>
            <person name="Tuemmler B."/>
            <person name="Fraser C.M."/>
        </authorList>
    </citation>
    <scope>NUCLEOTIDE SEQUENCE [LARGE SCALE GENOMIC DNA]</scope>
    <source>
        <strain>ATCC 47054 / DSM 6125 / CFBP 8728 / NCIMB 11950 / KT2440</strain>
    </source>
</reference>
<feature type="chain" id="PRO_0000104344" description="Large ribosomal subunit protein uL11">
    <location>
        <begin position="1"/>
        <end position="143"/>
    </location>
</feature>
<proteinExistence type="inferred from homology"/>
<accession>Q88QP5</accession>
<evidence type="ECO:0000255" key="1">
    <source>
        <dbReference type="HAMAP-Rule" id="MF_00736"/>
    </source>
</evidence>
<evidence type="ECO:0000305" key="2"/>
<keyword id="KW-0488">Methylation</keyword>
<keyword id="KW-1185">Reference proteome</keyword>
<keyword id="KW-0687">Ribonucleoprotein</keyword>
<keyword id="KW-0689">Ribosomal protein</keyword>
<keyword id="KW-0694">RNA-binding</keyword>
<keyword id="KW-0699">rRNA-binding</keyword>
<protein>
    <recommendedName>
        <fullName evidence="1">Large ribosomal subunit protein uL11</fullName>
    </recommendedName>
    <alternativeName>
        <fullName evidence="2">50S ribosomal protein L11</fullName>
    </alternativeName>
</protein>
<dbReference type="EMBL" id="AE015451">
    <property type="protein sequence ID" value="AAN66073.1"/>
    <property type="molecule type" value="Genomic_DNA"/>
</dbReference>
<dbReference type="RefSeq" id="NP_742609.1">
    <property type="nucleotide sequence ID" value="NC_002947.4"/>
</dbReference>
<dbReference type="RefSeq" id="WP_003255500.1">
    <property type="nucleotide sequence ID" value="NZ_CP169744.1"/>
</dbReference>
<dbReference type="SMR" id="Q88QP5"/>
<dbReference type="STRING" id="160488.PP_0443"/>
<dbReference type="PaxDb" id="160488-PP_0443"/>
<dbReference type="GeneID" id="97165968"/>
<dbReference type="KEGG" id="ppu:PP_0443"/>
<dbReference type="PATRIC" id="fig|160488.4.peg.474"/>
<dbReference type="eggNOG" id="COG0080">
    <property type="taxonomic scope" value="Bacteria"/>
</dbReference>
<dbReference type="HOGENOM" id="CLU_074237_2_0_6"/>
<dbReference type="OrthoDB" id="9802408at2"/>
<dbReference type="PhylomeDB" id="Q88QP5"/>
<dbReference type="BioCyc" id="PPUT160488:G1G01-486-MONOMER"/>
<dbReference type="Proteomes" id="UP000000556">
    <property type="component" value="Chromosome"/>
</dbReference>
<dbReference type="GO" id="GO:0022625">
    <property type="term" value="C:cytosolic large ribosomal subunit"/>
    <property type="evidence" value="ECO:0007669"/>
    <property type="project" value="TreeGrafter"/>
</dbReference>
<dbReference type="GO" id="GO:0070180">
    <property type="term" value="F:large ribosomal subunit rRNA binding"/>
    <property type="evidence" value="ECO:0007669"/>
    <property type="project" value="UniProtKB-UniRule"/>
</dbReference>
<dbReference type="GO" id="GO:0003735">
    <property type="term" value="F:structural constituent of ribosome"/>
    <property type="evidence" value="ECO:0007669"/>
    <property type="project" value="InterPro"/>
</dbReference>
<dbReference type="GO" id="GO:0006412">
    <property type="term" value="P:translation"/>
    <property type="evidence" value="ECO:0007669"/>
    <property type="project" value="UniProtKB-UniRule"/>
</dbReference>
<dbReference type="CDD" id="cd00349">
    <property type="entry name" value="Ribosomal_L11"/>
    <property type="match status" value="1"/>
</dbReference>
<dbReference type="FunFam" id="1.10.10.250:FF:000001">
    <property type="entry name" value="50S ribosomal protein L11"/>
    <property type="match status" value="1"/>
</dbReference>
<dbReference type="FunFam" id="3.30.1550.10:FF:000001">
    <property type="entry name" value="50S ribosomal protein L11"/>
    <property type="match status" value="1"/>
</dbReference>
<dbReference type="Gene3D" id="1.10.10.250">
    <property type="entry name" value="Ribosomal protein L11, C-terminal domain"/>
    <property type="match status" value="1"/>
</dbReference>
<dbReference type="Gene3D" id="3.30.1550.10">
    <property type="entry name" value="Ribosomal protein L11/L12, N-terminal domain"/>
    <property type="match status" value="1"/>
</dbReference>
<dbReference type="HAMAP" id="MF_00736">
    <property type="entry name" value="Ribosomal_uL11"/>
    <property type="match status" value="1"/>
</dbReference>
<dbReference type="InterPro" id="IPR000911">
    <property type="entry name" value="Ribosomal_uL11"/>
</dbReference>
<dbReference type="InterPro" id="IPR006519">
    <property type="entry name" value="Ribosomal_uL11_bac-typ"/>
</dbReference>
<dbReference type="InterPro" id="IPR020783">
    <property type="entry name" value="Ribosomal_uL11_C"/>
</dbReference>
<dbReference type="InterPro" id="IPR036769">
    <property type="entry name" value="Ribosomal_uL11_C_sf"/>
</dbReference>
<dbReference type="InterPro" id="IPR020785">
    <property type="entry name" value="Ribosomal_uL11_CS"/>
</dbReference>
<dbReference type="InterPro" id="IPR020784">
    <property type="entry name" value="Ribosomal_uL11_N"/>
</dbReference>
<dbReference type="InterPro" id="IPR036796">
    <property type="entry name" value="Ribosomal_uL11_N_sf"/>
</dbReference>
<dbReference type="NCBIfam" id="TIGR01632">
    <property type="entry name" value="L11_bact"/>
    <property type="match status" value="1"/>
</dbReference>
<dbReference type="PANTHER" id="PTHR11661">
    <property type="entry name" value="60S RIBOSOMAL PROTEIN L12"/>
    <property type="match status" value="1"/>
</dbReference>
<dbReference type="PANTHER" id="PTHR11661:SF1">
    <property type="entry name" value="LARGE RIBOSOMAL SUBUNIT PROTEIN UL11M"/>
    <property type="match status" value="1"/>
</dbReference>
<dbReference type="Pfam" id="PF00298">
    <property type="entry name" value="Ribosomal_L11"/>
    <property type="match status" value="1"/>
</dbReference>
<dbReference type="Pfam" id="PF03946">
    <property type="entry name" value="Ribosomal_L11_N"/>
    <property type="match status" value="1"/>
</dbReference>
<dbReference type="SMART" id="SM00649">
    <property type="entry name" value="RL11"/>
    <property type="match status" value="1"/>
</dbReference>
<dbReference type="SUPFAM" id="SSF54747">
    <property type="entry name" value="Ribosomal L11/L12e N-terminal domain"/>
    <property type="match status" value="1"/>
</dbReference>
<dbReference type="SUPFAM" id="SSF46906">
    <property type="entry name" value="Ribosomal protein L11, C-terminal domain"/>
    <property type="match status" value="1"/>
</dbReference>
<dbReference type="PROSITE" id="PS00359">
    <property type="entry name" value="RIBOSOMAL_L11"/>
    <property type="match status" value="1"/>
</dbReference>
<comment type="function">
    <text evidence="1">Forms part of the ribosomal stalk which helps the ribosome interact with GTP-bound translation factors.</text>
</comment>
<comment type="subunit">
    <text evidence="1">Part of the ribosomal stalk of the 50S ribosomal subunit. Interacts with L10 and the large rRNA to form the base of the stalk. L10 forms an elongated spine to which L12 dimers bind in a sequential fashion forming a multimeric L10(L12)X complex.</text>
</comment>
<comment type="PTM">
    <text evidence="1">One or more lysine residues are methylated.</text>
</comment>
<comment type="similarity">
    <text evidence="1">Belongs to the universal ribosomal protein uL11 family.</text>
</comment>
<sequence>MAKKIQAYIKLQVKAGQANPSPPVGPALGQHGVNIMEFCKAFNARTQGQEAGLPTPVIITVYSDRSFTFETKSTPASVLLKKAAGLTSGSARPNTVKVGTVTRAQLEDIAKAKQADLTAADLDAAVRTIAGSARSMGLNVEGV</sequence>
<organism>
    <name type="scientific">Pseudomonas putida (strain ATCC 47054 / DSM 6125 / CFBP 8728 / NCIMB 11950 / KT2440)</name>
    <dbReference type="NCBI Taxonomy" id="160488"/>
    <lineage>
        <taxon>Bacteria</taxon>
        <taxon>Pseudomonadati</taxon>
        <taxon>Pseudomonadota</taxon>
        <taxon>Gammaproteobacteria</taxon>
        <taxon>Pseudomonadales</taxon>
        <taxon>Pseudomonadaceae</taxon>
        <taxon>Pseudomonas</taxon>
    </lineage>
</organism>